<keyword id="KW-0150">Chloroplast</keyword>
<keyword id="KW-0934">Plastid</keyword>
<keyword id="KW-1185">Reference proteome</keyword>
<keyword id="KW-0687">Ribonucleoprotein</keyword>
<keyword id="KW-0689">Ribosomal protein</keyword>
<keyword id="KW-0694">RNA-binding</keyword>
<keyword id="KW-0699">rRNA-binding</keyword>
<reference key="1">
    <citation type="journal article" date="1989" name="Mol. Gen. Genet.">
        <title>The complete sequence of the rice (Oryza sativa) chloroplast genome: intermolecular recombination between distinct tRNA genes accounts for a major plastid DNA inversion during the evolution of the cereals.</title>
        <authorList>
            <person name="Hiratsuka J."/>
            <person name="Shimada H."/>
            <person name="Whittier R."/>
            <person name="Ishibashi T."/>
            <person name="Sakamoto M."/>
            <person name="Mori M."/>
            <person name="Kondo C."/>
            <person name="Honji Y."/>
            <person name="Sun C.-R."/>
            <person name="Meng B.-Y."/>
            <person name="Li Y.-Q."/>
            <person name="Kanno A."/>
            <person name="Nishizawa Y."/>
            <person name="Hirai A."/>
            <person name="Shinozaki K."/>
            <person name="Sugiura M."/>
        </authorList>
    </citation>
    <scope>NUCLEOTIDE SEQUENCE [LARGE SCALE GENOMIC DNA]</scope>
    <source>
        <strain>cv. Nipponbare</strain>
    </source>
</reference>
<reference key="2">
    <citation type="journal article" date="2004" name="Plant Physiol.">
        <title>A comparison of rice chloroplast genomes.</title>
        <authorList>
            <person name="Tang J."/>
            <person name="Xia H."/>
            <person name="Cao M."/>
            <person name="Zhang X."/>
            <person name="Zeng W."/>
            <person name="Hu S."/>
            <person name="Tong W."/>
            <person name="Wang J."/>
            <person name="Wang J."/>
            <person name="Yu J."/>
            <person name="Yang H."/>
            <person name="Zhu L."/>
        </authorList>
    </citation>
    <scope>NUCLEOTIDE SEQUENCE [LARGE SCALE GENOMIC DNA]</scope>
    <source>
        <strain>cv. Nipponbare</strain>
    </source>
</reference>
<reference key="3">
    <citation type="journal article" date="2005" name="Nature">
        <title>The map-based sequence of the rice genome.</title>
        <authorList>
            <consortium name="International rice genome sequencing project (IRGSP)"/>
        </authorList>
    </citation>
    <scope>NUCLEOTIDE SEQUENCE [LARGE SCALE GENOMIC DNA]</scope>
    <source>
        <strain>cv. Nipponbare</strain>
    </source>
</reference>
<reference key="4">
    <citation type="journal article" date="1988" name="Gene">
        <title>Organization and nucleotide sequence of genes at both junctions between the two inverted repeats and the large single-copy region in the rice chloroplast genome.</title>
        <authorList>
            <person name="Moon E."/>
            <person name="Wu R."/>
        </authorList>
    </citation>
    <scope>NUCLEOTIDE SEQUENCE [GENOMIC DNA] OF 1-12</scope>
    <source>
        <strain>cv. Labelle</strain>
        <tissue>Seedling</tissue>
    </source>
</reference>
<geneLocation type="chloroplast"/>
<dbReference type="EMBL" id="X15901">
    <property type="protein sequence ID" value="CAA33935.1"/>
    <property type="molecule type" value="Genomic_DNA"/>
</dbReference>
<dbReference type="EMBL" id="AY522330">
    <property type="protein sequence ID" value="AAS46148.1"/>
    <property type="molecule type" value="Genomic_DNA"/>
</dbReference>
<dbReference type="EMBL" id="AP005161">
    <property type="protein sequence ID" value="BAD05515.1"/>
    <property type="molecule type" value="Genomic_DNA"/>
</dbReference>
<dbReference type="EMBL" id="AP003825">
    <property type="protein sequence ID" value="BAC10088.1"/>
    <property type="molecule type" value="Genomic_DNA"/>
</dbReference>
<dbReference type="EMBL" id="AP005452">
    <property type="protein sequence ID" value="BAD31430.1"/>
    <property type="molecule type" value="Genomic_DNA"/>
</dbReference>
<dbReference type="EMBL" id="AP005683">
    <property type="protein sequence ID" value="BAD33781.1"/>
    <property type="molecule type" value="Genomic_DNA"/>
</dbReference>
<dbReference type="EMBL" id="AP005707">
    <property type="protein sequence ID" value="BAD36258.1"/>
    <property type="molecule type" value="Genomic_DNA"/>
</dbReference>
<dbReference type="EMBL" id="M22826">
    <property type="protein sequence ID" value="AAA84594.1"/>
    <property type="molecule type" value="Genomic_DNA"/>
</dbReference>
<dbReference type="PIR" id="JQ0266">
    <property type="entry name" value="R5RZ22"/>
</dbReference>
<dbReference type="RefSeq" id="NP_039425.1">
    <property type="nucleotide sequence ID" value="NC_001320.1"/>
</dbReference>
<dbReference type="SMR" id="P0C446"/>
<dbReference type="FunCoup" id="P0C446">
    <property type="interactions" value="230"/>
</dbReference>
<dbReference type="STRING" id="39947.P0C446"/>
<dbReference type="PaxDb" id="39947-P0C446"/>
<dbReference type="EnsemblPlants" id="transcript-rpl22">
    <property type="protein sequence ID" value="cds-CAA33935.1"/>
    <property type="gene ID" value="gene-rpl22"/>
</dbReference>
<dbReference type="GeneID" id="3131426"/>
<dbReference type="Gramene" id="transcript-rpl22">
    <property type="protein sequence ID" value="cds-CAA33935.1"/>
    <property type="gene ID" value="gene-rpl22"/>
</dbReference>
<dbReference type="KEGG" id="dosa:rpl22"/>
<dbReference type="KEGG" id="osa:3131426"/>
<dbReference type="InParanoid" id="P0C446"/>
<dbReference type="OrthoDB" id="1840754at2759"/>
<dbReference type="Proteomes" id="UP000000763">
    <property type="component" value="Chromosome 7"/>
</dbReference>
<dbReference type="Proteomes" id="UP000000763">
    <property type="component" value="Chromosome 8"/>
</dbReference>
<dbReference type="Proteomes" id="UP000000763">
    <property type="component" value="Chromosome 9"/>
</dbReference>
<dbReference type="Proteomes" id="UP000059680">
    <property type="component" value="Chloroplast"/>
</dbReference>
<dbReference type="GO" id="GO:0009507">
    <property type="term" value="C:chloroplast"/>
    <property type="evidence" value="ECO:0007669"/>
    <property type="project" value="UniProtKB-SubCell"/>
</dbReference>
<dbReference type="GO" id="GO:0015934">
    <property type="term" value="C:large ribosomal subunit"/>
    <property type="evidence" value="ECO:0000318"/>
    <property type="project" value="GO_Central"/>
</dbReference>
<dbReference type="GO" id="GO:0009536">
    <property type="term" value="C:plastid"/>
    <property type="evidence" value="ECO:0000305"/>
    <property type="project" value="Gramene"/>
</dbReference>
<dbReference type="GO" id="GO:0019843">
    <property type="term" value="F:rRNA binding"/>
    <property type="evidence" value="ECO:0007669"/>
    <property type="project" value="UniProtKB-UniRule"/>
</dbReference>
<dbReference type="GO" id="GO:0003735">
    <property type="term" value="F:structural constituent of ribosome"/>
    <property type="evidence" value="ECO:0000318"/>
    <property type="project" value="GO_Central"/>
</dbReference>
<dbReference type="GO" id="GO:0006412">
    <property type="term" value="P:translation"/>
    <property type="evidence" value="ECO:0000318"/>
    <property type="project" value="GO_Central"/>
</dbReference>
<dbReference type="CDD" id="cd00336">
    <property type="entry name" value="Ribosomal_L22"/>
    <property type="match status" value="1"/>
</dbReference>
<dbReference type="FunFam" id="3.90.470.10:FF:000004">
    <property type="entry name" value="50S ribosomal protein L22, chloroplastic"/>
    <property type="match status" value="1"/>
</dbReference>
<dbReference type="Gene3D" id="3.90.470.10">
    <property type="entry name" value="Ribosomal protein L22/L17"/>
    <property type="match status" value="1"/>
</dbReference>
<dbReference type="HAMAP" id="MF_01331_B">
    <property type="entry name" value="Ribosomal_uL22_B"/>
    <property type="match status" value="1"/>
</dbReference>
<dbReference type="InterPro" id="IPR001063">
    <property type="entry name" value="Ribosomal_uL22"/>
</dbReference>
<dbReference type="InterPro" id="IPR005727">
    <property type="entry name" value="Ribosomal_uL22_bac/chlpt-type"/>
</dbReference>
<dbReference type="InterPro" id="IPR047867">
    <property type="entry name" value="Ribosomal_uL22_bac/org-type"/>
</dbReference>
<dbReference type="InterPro" id="IPR018260">
    <property type="entry name" value="Ribosomal_uL22_CS"/>
</dbReference>
<dbReference type="InterPro" id="IPR036394">
    <property type="entry name" value="Ribosomal_uL22_sf"/>
</dbReference>
<dbReference type="NCBIfam" id="TIGR01044">
    <property type="entry name" value="rplV_bact"/>
    <property type="match status" value="1"/>
</dbReference>
<dbReference type="PANTHER" id="PTHR13501">
    <property type="entry name" value="CHLOROPLAST 50S RIBOSOMAL PROTEIN L22-RELATED"/>
    <property type="match status" value="1"/>
</dbReference>
<dbReference type="PANTHER" id="PTHR13501:SF10">
    <property type="entry name" value="LARGE RIBOSOMAL SUBUNIT PROTEIN UL22M"/>
    <property type="match status" value="1"/>
</dbReference>
<dbReference type="Pfam" id="PF00237">
    <property type="entry name" value="Ribosomal_L22"/>
    <property type="match status" value="1"/>
</dbReference>
<dbReference type="SUPFAM" id="SSF54843">
    <property type="entry name" value="Ribosomal protein L22"/>
    <property type="match status" value="1"/>
</dbReference>
<dbReference type="PROSITE" id="PS00464">
    <property type="entry name" value="RIBOSOMAL_L22"/>
    <property type="match status" value="1"/>
</dbReference>
<sequence>MTSFKLVKYTPRIKKKKSGLRKLARKVPTDRLLKFERVFKAQKRIHMSVFKVQRVLDEIRWRYYEETVMILNLMPYRASYPILKLVYSAAANATHYRDFDKANLFITKAEVSRSTIMNKFRPRARGRSSPIKKTMCHITIVLNIVKKSK</sequence>
<proteinExistence type="inferred from homology"/>
<organism>
    <name type="scientific">Oryza sativa subsp. japonica</name>
    <name type="common">Rice</name>
    <dbReference type="NCBI Taxonomy" id="39947"/>
    <lineage>
        <taxon>Eukaryota</taxon>
        <taxon>Viridiplantae</taxon>
        <taxon>Streptophyta</taxon>
        <taxon>Embryophyta</taxon>
        <taxon>Tracheophyta</taxon>
        <taxon>Spermatophyta</taxon>
        <taxon>Magnoliopsida</taxon>
        <taxon>Liliopsida</taxon>
        <taxon>Poales</taxon>
        <taxon>Poaceae</taxon>
        <taxon>BOP clade</taxon>
        <taxon>Oryzoideae</taxon>
        <taxon>Oryzeae</taxon>
        <taxon>Oryzinae</taxon>
        <taxon>Oryza</taxon>
        <taxon>Oryza sativa</taxon>
    </lineage>
</organism>
<accession>P0C446</accession>
<accession>P12140</accession>
<accession>Q6QY46</accession>
<accession>Q7F1T7</accession>
<protein>
    <recommendedName>
        <fullName evidence="2">Large ribosomal subunit protein uL22c</fullName>
    </recommendedName>
    <alternativeName>
        <fullName>50S ribosomal protein L22, chloroplastic</fullName>
    </alternativeName>
</protein>
<feature type="chain" id="PRO_0000290048" description="Large ribosomal subunit protein uL22c">
    <location>
        <begin position="1"/>
        <end position="149"/>
    </location>
</feature>
<gene>
    <name type="primary">rpl22</name>
    <name type="ORF">Nip117</name>
</gene>
<comment type="function">
    <text evidence="1">This protein binds specifically to 23S rRNA.</text>
</comment>
<comment type="function">
    <text evidence="1">The globular domain of the protein is located near the polypeptide exit tunnel on the outside of the subunit, while an extended beta-hairpin is found that lines the wall of the exit tunnel in the center of the 70S ribosome.</text>
</comment>
<comment type="subunit">
    <text evidence="1">Part of the 50S ribosomal subunit.</text>
</comment>
<comment type="subcellular location">
    <subcellularLocation>
        <location>Plastid</location>
        <location>Chloroplast</location>
    </subcellularLocation>
</comment>
<comment type="similarity">
    <text evidence="2">Belongs to the universal ribosomal protein uL22 family.</text>
</comment>
<comment type="caution">
    <text evidence="2">A stretch of the chloroplast genome is duplicated within chromosomes 7, 8 and 9 resulting in the duplication of the gene. The expression of these duplicated genes have not been demonstrated.</text>
</comment>
<name>RK22_ORYSJ</name>
<evidence type="ECO:0000250" key="1"/>
<evidence type="ECO:0000305" key="2"/>